<feature type="chain" id="PRO_0000187610" description="Uroporphyrinogen decarboxylase">
    <location>
        <begin position="1"/>
        <end position="377"/>
    </location>
</feature>
<feature type="binding site" evidence="1">
    <location>
        <begin position="40"/>
        <end position="44"/>
    </location>
    <ligand>
        <name>substrate</name>
    </ligand>
</feature>
<feature type="binding site" evidence="1">
    <location>
        <position position="89"/>
    </location>
    <ligand>
        <name>substrate</name>
    </ligand>
</feature>
<feature type="binding site" evidence="1">
    <location>
        <position position="169"/>
    </location>
    <ligand>
        <name>substrate</name>
    </ligand>
</feature>
<feature type="binding site" evidence="1">
    <location>
        <position position="224"/>
    </location>
    <ligand>
        <name>substrate</name>
    </ligand>
</feature>
<feature type="binding site" evidence="1">
    <location>
        <position position="354"/>
    </location>
    <ligand>
        <name>substrate</name>
    </ligand>
</feature>
<feature type="site" description="Transition state stabilizer" evidence="1">
    <location>
        <position position="89"/>
    </location>
</feature>
<keyword id="KW-0963">Cytoplasm</keyword>
<keyword id="KW-0210">Decarboxylase</keyword>
<keyword id="KW-0456">Lyase</keyword>
<keyword id="KW-0627">Porphyrin biosynthesis</keyword>
<keyword id="KW-1185">Reference proteome</keyword>
<protein>
    <recommendedName>
        <fullName evidence="1">Uroporphyrinogen decarboxylase</fullName>
        <shortName evidence="1">UPD</shortName>
        <shortName evidence="1">URO-D</shortName>
        <ecNumber evidence="1">4.1.1.37</ecNumber>
    </recommendedName>
</protein>
<comment type="function">
    <text evidence="1">Catalyzes the decarboxylation of four acetate groups of uroporphyrinogen-III to yield coproporphyrinogen-III.</text>
</comment>
<comment type="catalytic activity">
    <reaction evidence="1">
        <text>uroporphyrinogen III + 4 H(+) = coproporphyrinogen III + 4 CO2</text>
        <dbReference type="Rhea" id="RHEA:19865"/>
        <dbReference type="ChEBI" id="CHEBI:15378"/>
        <dbReference type="ChEBI" id="CHEBI:16526"/>
        <dbReference type="ChEBI" id="CHEBI:57308"/>
        <dbReference type="ChEBI" id="CHEBI:57309"/>
        <dbReference type="EC" id="4.1.1.37"/>
    </reaction>
</comment>
<comment type="pathway">
    <text evidence="1">Porphyrin-containing compound metabolism; protoporphyrin-IX biosynthesis; coproporphyrinogen-III from 5-aminolevulinate: step 4/4.</text>
</comment>
<comment type="subunit">
    <text evidence="1">Homodimer.</text>
</comment>
<comment type="subcellular location">
    <subcellularLocation>
        <location evidence="1">Cytoplasm</location>
    </subcellularLocation>
</comment>
<comment type="similarity">
    <text evidence="1">Belongs to the uroporphyrinogen decarboxylase family.</text>
</comment>
<name>DCUP_LEIXX</name>
<proteinExistence type="inferred from homology"/>
<accession>Q6AHF5</accession>
<organism>
    <name type="scientific">Leifsonia xyli subsp. xyli (strain CTCB07)</name>
    <dbReference type="NCBI Taxonomy" id="281090"/>
    <lineage>
        <taxon>Bacteria</taxon>
        <taxon>Bacillati</taxon>
        <taxon>Actinomycetota</taxon>
        <taxon>Actinomycetes</taxon>
        <taxon>Micrococcales</taxon>
        <taxon>Microbacteriaceae</taxon>
        <taxon>Leifsonia</taxon>
    </lineage>
</organism>
<gene>
    <name evidence="1" type="primary">hemE</name>
    <name type="ordered locus">Lxx01040</name>
</gene>
<evidence type="ECO:0000255" key="1">
    <source>
        <dbReference type="HAMAP-Rule" id="MF_00218"/>
    </source>
</evidence>
<sequence length="377" mass="40155">MIVTALDPTHPLAAGLTHASRLVRSYQGERQEVTPVWFMRQAGRSLPEYRDLRVGTRMLDVCLDPAMASEITLQPVRRHGVDAGIFFSDIVVPLKLAGVEVEIQPGKGPVFERAVRTSADVDRLSAVDPAALAADTFAAVQEAVRLTTAELNETPLIGFAGAPFTLAAYLVEGGPSKDHLRARTLMHAAPGAWARLMDWTADLSGAFLRAQVLAGASAAQLFDSWAGSLSLRDYAEHAAPASARAFSHVRDLTYTVPSADPDGEAVVRAVPIVHFGVGTGELLPAMHEAGADAIGVDHRTLLDEASRRLGHIVPLQGNADPAMLAAPWEVLSGHALDVLDRGRAAPAHVFNLGHGVPPETDPAVLTRVVELVHGWRA</sequence>
<reference key="1">
    <citation type="journal article" date="2004" name="Mol. Plant Microbe Interact.">
        <title>The genome sequence of the Gram-positive sugarcane pathogen Leifsonia xyli subsp. xyli.</title>
        <authorList>
            <person name="Monteiro-Vitorello C.B."/>
            <person name="Camargo L.E.A."/>
            <person name="Van Sluys M.A."/>
            <person name="Kitajima J.P."/>
            <person name="Truffi D."/>
            <person name="do Amaral A.M."/>
            <person name="Harakava R."/>
            <person name="de Oliveira J.C.F."/>
            <person name="Wood D."/>
            <person name="de Oliveira M.C."/>
            <person name="Miyaki C.Y."/>
            <person name="Takita M.A."/>
            <person name="da Silva A.C.R."/>
            <person name="Furlan L.R."/>
            <person name="Carraro D.M."/>
            <person name="Camarotte G."/>
            <person name="Almeida N.F. Jr."/>
            <person name="Carrer H."/>
            <person name="Coutinho L.L."/>
            <person name="El-Dorry H.A."/>
            <person name="Ferro M.I.T."/>
            <person name="Gagliardi P.R."/>
            <person name="Giglioti E."/>
            <person name="Goldman M.H.S."/>
            <person name="Goldman G.H."/>
            <person name="Kimura E.T."/>
            <person name="Ferro E.S."/>
            <person name="Kuramae E.E."/>
            <person name="Lemos E.G.M."/>
            <person name="Lemos M.V.F."/>
            <person name="Mauro S.M.Z."/>
            <person name="Machado M.A."/>
            <person name="Marino C.L."/>
            <person name="Menck C.F."/>
            <person name="Nunes L.R."/>
            <person name="Oliveira R.C."/>
            <person name="Pereira G.G."/>
            <person name="Siqueira W."/>
            <person name="de Souza A.A."/>
            <person name="Tsai S.M."/>
            <person name="Zanca A.S."/>
            <person name="Simpson A.J.G."/>
            <person name="Brumbley S.M."/>
            <person name="Setubal J.C."/>
        </authorList>
    </citation>
    <scope>NUCLEOTIDE SEQUENCE [LARGE SCALE GENOMIC DNA]</scope>
    <source>
        <strain>CTCB07</strain>
    </source>
</reference>
<dbReference type="EC" id="4.1.1.37" evidence="1"/>
<dbReference type="EMBL" id="AE016822">
    <property type="protein sequence ID" value="AAT88190.1"/>
    <property type="molecule type" value="Genomic_DNA"/>
</dbReference>
<dbReference type="RefSeq" id="WP_011185195.1">
    <property type="nucleotide sequence ID" value="NC_006087.1"/>
</dbReference>
<dbReference type="SMR" id="Q6AHF5"/>
<dbReference type="STRING" id="281090.Lxx01040"/>
<dbReference type="KEGG" id="lxx:Lxx01040"/>
<dbReference type="eggNOG" id="COG0407">
    <property type="taxonomic scope" value="Bacteria"/>
</dbReference>
<dbReference type="HOGENOM" id="CLU_040933_0_1_11"/>
<dbReference type="UniPathway" id="UPA00251">
    <property type="reaction ID" value="UER00321"/>
</dbReference>
<dbReference type="Proteomes" id="UP000001306">
    <property type="component" value="Chromosome"/>
</dbReference>
<dbReference type="GO" id="GO:0005829">
    <property type="term" value="C:cytosol"/>
    <property type="evidence" value="ECO:0007669"/>
    <property type="project" value="TreeGrafter"/>
</dbReference>
<dbReference type="GO" id="GO:0004853">
    <property type="term" value="F:uroporphyrinogen decarboxylase activity"/>
    <property type="evidence" value="ECO:0007669"/>
    <property type="project" value="UniProtKB-UniRule"/>
</dbReference>
<dbReference type="GO" id="GO:0006782">
    <property type="term" value="P:protoporphyrinogen IX biosynthetic process"/>
    <property type="evidence" value="ECO:0007669"/>
    <property type="project" value="UniProtKB-UniRule"/>
</dbReference>
<dbReference type="CDD" id="cd00717">
    <property type="entry name" value="URO-D"/>
    <property type="match status" value="1"/>
</dbReference>
<dbReference type="Gene3D" id="3.20.20.210">
    <property type="match status" value="1"/>
</dbReference>
<dbReference type="HAMAP" id="MF_00218">
    <property type="entry name" value="URO_D"/>
    <property type="match status" value="1"/>
</dbReference>
<dbReference type="InterPro" id="IPR038071">
    <property type="entry name" value="UROD/MetE-like_sf"/>
</dbReference>
<dbReference type="InterPro" id="IPR006361">
    <property type="entry name" value="Uroporphyrinogen_deCO2ase_HemE"/>
</dbReference>
<dbReference type="InterPro" id="IPR000257">
    <property type="entry name" value="Uroporphyrinogen_deCOase"/>
</dbReference>
<dbReference type="NCBIfam" id="TIGR01464">
    <property type="entry name" value="hemE"/>
    <property type="match status" value="1"/>
</dbReference>
<dbReference type="PANTHER" id="PTHR21091">
    <property type="entry name" value="METHYLTETRAHYDROFOLATE:HOMOCYSTEINE METHYLTRANSFERASE RELATED"/>
    <property type="match status" value="1"/>
</dbReference>
<dbReference type="PANTHER" id="PTHR21091:SF169">
    <property type="entry name" value="UROPORPHYRINOGEN DECARBOXYLASE"/>
    <property type="match status" value="1"/>
</dbReference>
<dbReference type="Pfam" id="PF01208">
    <property type="entry name" value="URO-D"/>
    <property type="match status" value="1"/>
</dbReference>
<dbReference type="SUPFAM" id="SSF51726">
    <property type="entry name" value="UROD/MetE-like"/>
    <property type="match status" value="1"/>
</dbReference>
<dbReference type="PROSITE" id="PS00906">
    <property type="entry name" value="UROD_1"/>
    <property type="match status" value="1"/>
</dbReference>
<dbReference type="PROSITE" id="PS00907">
    <property type="entry name" value="UROD_2"/>
    <property type="match status" value="1"/>
</dbReference>